<proteinExistence type="evidence at protein level"/>
<sequence length="217" mass="25000">MAAGSRTSLLLAFGLLCLSWLQEGSAFPTIPLSRLFDNAMLRARRLYQLAYDTYQEFEEAYILKEQKYSFLQNPQTSLCFSESIPTPSNRVKTQQKSNLELLRISLLLIQSWLEPVQLLRSVFANSLVYGASDSNVYRHLKDLEEGIQTLMWRLEDGSPRTGQIFNQSYSKFDTKSHNDDALLKNYGLLYCFRKDMDKVETFLRIVQCRSVEGSCGF</sequence>
<accession>P01242</accession>
<accession>B1A4H5</accession>
<accession>B1A4H7</accession>
<accession>O14643</accession>
<accession>O14644</accession>
<accession>P09587</accession>
<evidence type="ECO:0000250" key="1"/>
<evidence type="ECO:0000250" key="2">
    <source>
        <dbReference type="UniProtKB" id="P01241"/>
    </source>
</evidence>
<evidence type="ECO:0000255" key="3"/>
<evidence type="ECO:0000269" key="4">
    <source>
    </source>
</evidence>
<evidence type="ECO:0000303" key="5">
    <source>
    </source>
</evidence>
<evidence type="ECO:0000303" key="6">
    <source>
    </source>
</evidence>
<evidence type="ECO:0000303" key="7">
    <source>
    </source>
</evidence>
<evidence type="ECO:0000303" key="8">
    <source>
    </source>
</evidence>
<evidence type="ECO:0000305" key="9"/>
<organism>
    <name type="scientific">Homo sapiens</name>
    <name type="common">Human</name>
    <dbReference type="NCBI Taxonomy" id="9606"/>
    <lineage>
        <taxon>Eukaryota</taxon>
        <taxon>Metazoa</taxon>
        <taxon>Chordata</taxon>
        <taxon>Craniata</taxon>
        <taxon>Vertebrata</taxon>
        <taxon>Euteleostomi</taxon>
        <taxon>Mammalia</taxon>
        <taxon>Eutheria</taxon>
        <taxon>Euarchontoglires</taxon>
        <taxon>Primates</taxon>
        <taxon>Haplorrhini</taxon>
        <taxon>Catarrhini</taxon>
        <taxon>Hominidae</taxon>
        <taxon>Homo</taxon>
    </lineage>
</organism>
<protein>
    <recommendedName>
        <fullName>Growth hormone variant</fullName>
        <shortName>GH-V</shortName>
    </recommendedName>
    <alternativeName>
        <fullName>Growth hormone 2</fullName>
    </alternativeName>
    <alternativeName>
        <fullName>Placenta-specific growth hormone</fullName>
    </alternativeName>
</protein>
<dbReference type="EMBL" id="K00470">
    <property type="protein sequence ID" value="AAA98619.1"/>
    <property type="molecule type" value="Genomic_DNA"/>
</dbReference>
<dbReference type="EMBL" id="J03756">
    <property type="protein sequence ID" value="AAB59547.1"/>
    <property type="molecule type" value="mRNA"/>
</dbReference>
<dbReference type="EMBL" id="J03756">
    <property type="protein sequence ID" value="AAB59548.1"/>
    <property type="molecule type" value="mRNA"/>
</dbReference>
<dbReference type="EMBL" id="M38451">
    <property type="protein sequence ID" value="AAA35891.1"/>
    <property type="molecule type" value="mRNA"/>
</dbReference>
<dbReference type="EMBL" id="J03071">
    <property type="protein sequence ID" value="AAA52552.1"/>
    <property type="molecule type" value="Genomic_DNA"/>
</dbReference>
<dbReference type="EMBL" id="AF006060">
    <property type="protein sequence ID" value="AAB71828.1"/>
    <property type="molecule type" value="mRNA"/>
</dbReference>
<dbReference type="EMBL" id="AF006061">
    <property type="protein sequence ID" value="AAB71829.1"/>
    <property type="molecule type" value="mRNA"/>
</dbReference>
<dbReference type="EMBL" id="EU421715">
    <property type="protein sequence ID" value="ABZ88719.1"/>
    <property type="molecule type" value="Genomic_DNA"/>
</dbReference>
<dbReference type="EMBL" id="EU421715">
    <property type="protein sequence ID" value="ABZ88720.1"/>
    <property type="molecule type" value="Genomic_DNA"/>
</dbReference>
<dbReference type="EMBL" id="EU421715">
    <property type="protein sequence ID" value="ABZ88721.1"/>
    <property type="molecule type" value="Genomic_DNA"/>
</dbReference>
<dbReference type="EMBL" id="EU421715">
    <property type="protein sequence ID" value="ABZ88722.1"/>
    <property type="molecule type" value="Genomic_DNA"/>
</dbReference>
<dbReference type="EMBL" id="AK312194">
    <property type="protein sequence ID" value="BAG35127.1"/>
    <property type="molecule type" value="mRNA"/>
</dbReference>
<dbReference type="EMBL" id="AB451332">
    <property type="protein sequence ID" value="BAG70146.1"/>
    <property type="molecule type" value="mRNA"/>
</dbReference>
<dbReference type="EMBL" id="AB451477">
    <property type="protein sequence ID" value="BAG70291.1"/>
    <property type="molecule type" value="mRNA"/>
</dbReference>
<dbReference type="EMBL" id="AC040958">
    <property type="status" value="NOT_ANNOTATED_CDS"/>
    <property type="molecule type" value="Genomic_DNA"/>
</dbReference>
<dbReference type="EMBL" id="CH471109">
    <property type="protein sequence ID" value="EAW94238.1"/>
    <property type="molecule type" value="Genomic_DNA"/>
</dbReference>
<dbReference type="EMBL" id="CH471109">
    <property type="protein sequence ID" value="EAW94248.1"/>
    <property type="molecule type" value="Genomic_DNA"/>
</dbReference>
<dbReference type="EMBL" id="CH471109">
    <property type="protein sequence ID" value="EAW94252.1"/>
    <property type="molecule type" value="Genomic_DNA"/>
</dbReference>
<dbReference type="EMBL" id="CH471109">
    <property type="protein sequence ID" value="EAW94258.1"/>
    <property type="molecule type" value="Genomic_DNA"/>
</dbReference>
<dbReference type="EMBL" id="BC020760">
    <property type="protein sequence ID" value="AAH20760.1"/>
    <property type="molecule type" value="mRNA"/>
</dbReference>
<dbReference type="CCDS" id="CCDS11647.1">
    <molecule id="P01242-1"/>
</dbReference>
<dbReference type="CCDS" id="CCDS11648.1">
    <molecule id="P01242-2"/>
</dbReference>
<dbReference type="CCDS" id="CCDS45757.1">
    <molecule id="P01242-4"/>
</dbReference>
<dbReference type="CCDS" id="CCDS45758.1">
    <molecule id="P01242-3"/>
</dbReference>
<dbReference type="PIR" id="A28072">
    <property type="entry name" value="STHUV2"/>
</dbReference>
<dbReference type="PIR" id="D32435">
    <property type="entry name" value="STHUV"/>
</dbReference>
<dbReference type="RefSeq" id="NP_002050.1">
    <molecule id="P01242-1"/>
    <property type="nucleotide sequence ID" value="NM_002059.5"/>
</dbReference>
<dbReference type="RefSeq" id="NP_072050.1">
    <molecule id="P01242-3"/>
    <property type="nucleotide sequence ID" value="NM_022556.4"/>
</dbReference>
<dbReference type="RefSeq" id="NP_072051.1">
    <molecule id="P01242-2"/>
    <property type="nucleotide sequence ID" value="NM_022557.4"/>
</dbReference>
<dbReference type="RefSeq" id="NP_072052.1">
    <molecule id="P01242-4"/>
    <property type="nucleotide sequence ID" value="NM_022558.4"/>
</dbReference>
<dbReference type="SMR" id="P01242"/>
<dbReference type="BioGRID" id="108956">
    <property type="interactions" value="6"/>
</dbReference>
<dbReference type="FunCoup" id="P01242">
    <property type="interactions" value="1050"/>
</dbReference>
<dbReference type="IntAct" id="P01242">
    <property type="interactions" value="3"/>
</dbReference>
<dbReference type="GlyCosmos" id="P01242">
    <property type="glycosylation" value="1 site, No reported glycans"/>
</dbReference>
<dbReference type="GlyGen" id="P01242">
    <property type="glycosylation" value="1 site"/>
</dbReference>
<dbReference type="iPTMnet" id="P01242"/>
<dbReference type="PhosphoSitePlus" id="P01242"/>
<dbReference type="BioMuta" id="GH2"/>
<dbReference type="MassIVE" id="P01242"/>
<dbReference type="PeptideAtlas" id="P01242"/>
<dbReference type="ProteomicsDB" id="51357">
    <molecule id="P01242-1"/>
</dbReference>
<dbReference type="ProteomicsDB" id="51358">
    <molecule id="P01242-2"/>
</dbReference>
<dbReference type="ProteomicsDB" id="51359">
    <molecule id="P01242-3"/>
</dbReference>
<dbReference type="ProteomicsDB" id="51360">
    <molecule id="P01242-4"/>
</dbReference>
<dbReference type="Antibodypedia" id="18989">
    <property type="antibodies" value="249 antibodies from 27 providers"/>
</dbReference>
<dbReference type="DNASU" id="2689"/>
<dbReference type="Ensembl" id="ENST00000332800.7">
    <molecule id="P01242-2"/>
    <property type="protein sequence ID" value="ENSP00000333157.7"/>
    <property type="gene ID" value="ENSG00000136487.18"/>
</dbReference>
<dbReference type="Ensembl" id="ENST00000423893.7">
    <molecule id="P01242-1"/>
    <property type="protein sequence ID" value="ENSP00000409294.2"/>
    <property type="gene ID" value="ENSG00000136487.18"/>
</dbReference>
<dbReference type="Ensembl" id="ENST00000449787.6">
    <molecule id="P01242-3"/>
    <property type="protein sequence ID" value="ENSP00000410618.2"/>
    <property type="gene ID" value="ENSG00000136487.18"/>
</dbReference>
<dbReference type="Ensembl" id="ENST00000456543.6">
    <molecule id="P01242-4"/>
    <property type="protein sequence ID" value="ENSP00000394122.2"/>
    <property type="gene ID" value="ENSG00000136487.18"/>
</dbReference>
<dbReference type="GeneID" id="2689"/>
<dbReference type="KEGG" id="hsa:2689"/>
<dbReference type="MANE-Select" id="ENST00000423893.7">
    <property type="protein sequence ID" value="ENSP00000409294.2"/>
    <property type="RefSeq nucleotide sequence ID" value="NM_002059.5"/>
    <property type="RefSeq protein sequence ID" value="NP_002050.1"/>
</dbReference>
<dbReference type="UCSC" id="uc002jcl.3">
    <molecule id="P01242-1"/>
    <property type="organism name" value="human"/>
</dbReference>
<dbReference type="AGR" id="HGNC:4262"/>
<dbReference type="CTD" id="2689"/>
<dbReference type="DisGeNET" id="2689"/>
<dbReference type="GeneCards" id="GH2"/>
<dbReference type="HGNC" id="HGNC:4262">
    <property type="gene designation" value="GH2"/>
</dbReference>
<dbReference type="HPA" id="ENSG00000136487">
    <property type="expression patterns" value="Group enriched (pituitary gland, placenta)"/>
</dbReference>
<dbReference type="MIM" id="139240">
    <property type="type" value="gene"/>
</dbReference>
<dbReference type="neXtProt" id="NX_P01242"/>
<dbReference type="OpenTargets" id="ENSG00000136487"/>
<dbReference type="PharmGKB" id="PA28672"/>
<dbReference type="VEuPathDB" id="HostDB:ENSG00000136487"/>
<dbReference type="GeneTree" id="ENSGT00950000182818"/>
<dbReference type="HOGENOM" id="CLU_1153874_0_0_1"/>
<dbReference type="InParanoid" id="P01242"/>
<dbReference type="OMA" id="NSQVAFC"/>
<dbReference type="OrthoDB" id="9537348at2759"/>
<dbReference type="PAN-GO" id="P01242">
    <property type="GO annotations" value="10 GO annotations based on evolutionary models"/>
</dbReference>
<dbReference type="PhylomeDB" id="P01242"/>
<dbReference type="TreeFam" id="TF332592"/>
<dbReference type="PathwayCommons" id="P01242"/>
<dbReference type="Reactome" id="R-HSA-1170546">
    <property type="pathway name" value="Prolactin receptor signaling"/>
</dbReference>
<dbReference type="Reactome" id="R-HSA-982772">
    <property type="pathway name" value="Growth hormone receptor signaling"/>
</dbReference>
<dbReference type="SignaLink" id="P01242"/>
<dbReference type="SIGNOR" id="P01242"/>
<dbReference type="BioGRID-ORCS" id="2689">
    <property type="hits" value="7 hits in 1139 CRISPR screens"/>
</dbReference>
<dbReference type="ChiTaRS" id="GH2">
    <property type="organism name" value="human"/>
</dbReference>
<dbReference type="GeneWiki" id="Growth_hormone_2"/>
<dbReference type="GenomeRNAi" id="2689"/>
<dbReference type="Pharos" id="P01242">
    <property type="development level" value="Tbio"/>
</dbReference>
<dbReference type="PRO" id="PR:P01242"/>
<dbReference type="Proteomes" id="UP000005640">
    <property type="component" value="Chromosome 17"/>
</dbReference>
<dbReference type="RNAct" id="P01242">
    <property type="molecule type" value="protein"/>
</dbReference>
<dbReference type="Bgee" id="ENSG00000136487">
    <property type="expression patterns" value="Expressed in placenta and 54 other cell types or tissues"/>
</dbReference>
<dbReference type="ExpressionAtlas" id="P01242">
    <property type="expression patterns" value="baseline and differential"/>
</dbReference>
<dbReference type="GO" id="GO:0031904">
    <property type="term" value="C:endosome lumen"/>
    <property type="evidence" value="ECO:0000304"/>
    <property type="project" value="Reactome"/>
</dbReference>
<dbReference type="GO" id="GO:0005576">
    <property type="term" value="C:extracellular region"/>
    <property type="evidence" value="ECO:0000304"/>
    <property type="project" value="Reactome"/>
</dbReference>
<dbReference type="GO" id="GO:0005615">
    <property type="term" value="C:extracellular space"/>
    <property type="evidence" value="ECO:0000318"/>
    <property type="project" value="GO_Central"/>
</dbReference>
<dbReference type="GO" id="GO:0008083">
    <property type="term" value="F:growth factor activity"/>
    <property type="evidence" value="ECO:0000318"/>
    <property type="project" value="GO_Central"/>
</dbReference>
<dbReference type="GO" id="GO:0005131">
    <property type="term" value="F:growth hormone receptor binding"/>
    <property type="evidence" value="ECO:0000318"/>
    <property type="project" value="GO_Central"/>
</dbReference>
<dbReference type="GO" id="GO:0005179">
    <property type="term" value="F:hormone activity"/>
    <property type="evidence" value="ECO:0000318"/>
    <property type="project" value="GO_Central"/>
</dbReference>
<dbReference type="GO" id="GO:0048513">
    <property type="term" value="P:animal organ development"/>
    <property type="evidence" value="ECO:0000318"/>
    <property type="project" value="GO_Central"/>
</dbReference>
<dbReference type="GO" id="GO:0060396">
    <property type="term" value="P:growth hormone receptor signaling pathway"/>
    <property type="evidence" value="ECO:0000318"/>
    <property type="project" value="GO_Central"/>
</dbReference>
<dbReference type="GO" id="GO:0046427">
    <property type="term" value="P:positive regulation of receptor signaling pathway via JAK-STAT"/>
    <property type="evidence" value="ECO:0000318"/>
    <property type="project" value="GO_Central"/>
</dbReference>
<dbReference type="GO" id="GO:0031667">
    <property type="term" value="P:response to nutrient levels"/>
    <property type="evidence" value="ECO:0000318"/>
    <property type="project" value="GO_Central"/>
</dbReference>
<dbReference type="CDD" id="cd10285">
    <property type="entry name" value="somatotropin_like"/>
    <property type="match status" value="1"/>
</dbReference>
<dbReference type="FunFam" id="1.20.1250.10:FF:000012">
    <property type="entry name" value="Growth hormone 1"/>
    <property type="match status" value="1"/>
</dbReference>
<dbReference type="Gene3D" id="1.20.1250.10">
    <property type="match status" value="1"/>
</dbReference>
<dbReference type="InterPro" id="IPR009079">
    <property type="entry name" value="4_helix_cytokine-like_core"/>
</dbReference>
<dbReference type="InterPro" id="IPR034975">
    <property type="entry name" value="Somatotropin"/>
</dbReference>
<dbReference type="InterPro" id="IPR001400">
    <property type="entry name" value="Somatotropin/Prolactin"/>
</dbReference>
<dbReference type="InterPro" id="IPR018116">
    <property type="entry name" value="Somatotropin_CS"/>
</dbReference>
<dbReference type="PANTHER" id="PTHR11417:SF40">
    <property type="entry name" value="GROWTH HORMONE VARIANT"/>
    <property type="match status" value="1"/>
</dbReference>
<dbReference type="PANTHER" id="PTHR11417">
    <property type="entry name" value="SOMATOTROPIN,PROLACTIN"/>
    <property type="match status" value="1"/>
</dbReference>
<dbReference type="Pfam" id="PF00103">
    <property type="entry name" value="Hormone_1"/>
    <property type="match status" value="1"/>
</dbReference>
<dbReference type="PRINTS" id="PR00836">
    <property type="entry name" value="SOMATOTROPIN"/>
</dbReference>
<dbReference type="SUPFAM" id="SSF47266">
    <property type="entry name" value="4-helical cytokines"/>
    <property type="match status" value="1"/>
</dbReference>
<dbReference type="PROSITE" id="PS00266">
    <property type="entry name" value="SOMATOTROPIN_1"/>
    <property type="match status" value="1"/>
</dbReference>
<dbReference type="PROSITE" id="PS00338">
    <property type="entry name" value="SOMATOTROPIN_2"/>
    <property type="match status" value="1"/>
</dbReference>
<comment type="function">
    <text>Plays an important role in growth control. Its major role in stimulating body growth is to stimulate the liver and other tissues to secrete IGF1. It stimulates both the differentiation and proliferation of myoblasts. It also stimulates amino acid uptake and protein synthesis in muscle and other tissues.</text>
</comment>
<comment type="subunit">
    <text>Monomer, dimer, trimer, tetramer and pentamer, disulfide-linked or non-covalently associated, in homomeric and heteromeric combinations. Can also form a complex either with GHBP or with the alpha2-macroglobulin complex.</text>
</comment>
<comment type="subcellular location">
    <subcellularLocation>
        <location>Secreted</location>
    </subcellularLocation>
</comment>
<comment type="alternative products">
    <event type="alternative splicing"/>
    <isoform>
        <id>P01242-1</id>
        <name>1</name>
        <name>GH-V1</name>
        <sequence type="displayed"/>
    </isoform>
    <isoform>
        <id>P01242-2</id>
        <name>2</name>
        <name>GH-V2</name>
        <sequence type="described" ref="VSP_006203"/>
    </isoform>
    <isoform>
        <id>P01242-3</id>
        <name>3</name>
        <sequence type="described" ref="VSP_043206"/>
    </isoform>
    <isoform>
        <id>P01242-4</id>
        <name>4</name>
        <sequence type="described" ref="VSP_043480"/>
    </isoform>
</comment>
<comment type="tissue specificity">
    <text>Expressed in the placenta.</text>
</comment>
<comment type="similarity">
    <text evidence="9">Belongs to the somatotropin/prolactin family.</text>
</comment>
<keyword id="KW-0025">Alternative splicing</keyword>
<keyword id="KW-0903">Direct protein sequencing</keyword>
<keyword id="KW-1015">Disulfide bond</keyword>
<keyword id="KW-0325">Glycoprotein</keyword>
<keyword id="KW-0372">Hormone</keyword>
<keyword id="KW-0597">Phosphoprotein</keyword>
<keyword id="KW-1267">Proteomics identification</keyword>
<keyword id="KW-1185">Reference proteome</keyword>
<keyword id="KW-0964">Secreted</keyword>
<keyword id="KW-0732">Signal</keyword>
<gene>
    <name type="primary">GH2</name>
</gene>
<feature type="signal peptide" evidence="4">
    <location>
        <begin position="1"/>
        <end position="26"/>
    </location>
</feature>
<feature type="chain" id="PRO_0000033061" description="Growth hormone variant">
    <location>
        <begin position="27"/>
        <end position="217"/>
    </location>
</feature>
<feature type="modified residue" description="Phosphoserine" evidence="2">
    <location>
        <position position="132"/>
    </location>
</feature>
<feature type="modified residue" description="Phosphoserine" evidence="2">
    <location>
        <position position="176"/>
    </location>
</feature>
<feature type="glycosylation site" description="N-linked (GlcNAc...) asparagine" evidence="3">
    <location>
        <position position="166"/>
    </location>
</feature>
<feature type="disulfide bond" evidence="1">
    <location>
        <begin position="79"/>
        <end position="191"/>
    </location>
</feature>
<feature type="disulfide bond" evidence="1">
    <location>
        <begin position="208"/>
        <end position="215"/>
    </location>
</feature>
<feature type="splice variant" id="VSP_043206" description="In isoform 3." evidence="6 8">
    <location>
        <begin position="58"/>
        <end position="72"/>
    </location>
</feature>
<feature type="splice variant" id="VSP_043480" description="In isoform 4." evidence="8">
    <original>MWRLEDGSPRTGQIFNQSYSKFDTKSHNDDALLKNYGLLYCFRKDMDKVETFLRIVQCRSVEGSCGF</original>
    <variation>IGWKMAAPGLGRSSISPTASLTQNRTTMTHCSRTTGCSTASGRTWTRSRHSCASCSAALWRAAVASSCPGGIPVTPPQCLSWSWKVLLQCPPALS</variation>
    <location>
        <begin position="151"/>
        <end position="217"/>
    </location>
</feature>
<feature type="splice variant" id="VSP_006203" description="In isoform 2." evidence="5 7">
    <original>RLEDGSPRTGQIFNQSYSKFDTKSHNDDALLKNYGLLYCFRKDMDKVETFLRIVQCRSVEGSCGF</original>
    <variation>VRVAPGIPNPGAPLASRDWGEKHCCPLFSSQALTQENSPYSSFPLVNPPGLSLQPGGEGGKWMNERGREQCPSAWPLLLFLHFAEAGRWQPPDWADLQSVLQQV</variation>
    <location>
        <begin position="153"/>
        <end position="217"/>
    </location>
</feature>
<feature type="sequence variant" id="VAR_014591" description="In dbSNP:rs5389.">
    <original>R</original>
    <variation>W</variation>
    <location>
        <position position="90"/>
    </location>
</feature>
<feature type="sequence conflict" description="In Ref. 12; AA sequence." evidence="9" ref="12">
    <location>
        <position position="44"/>
    </location>
</feature>
<feature type="sequence conflict" description="In Ref. 2; AAB59547/AAB59548." evidence="9" ref="2">
    <original>I</original>
    <variation>T</variation>
    <location>
        <position position="109"/>
    </location>
</feature>
<reference key="1">
    <citation type="journal article" date="1982" name="DNA">
        <title>The human growth hormone gene family: nucleotide sequences show recent divergence and predict a new polypeptide hormone.</title>
        <authorList>
            <person name="Seeburg P.H."/>
        </authorList>
    </citation>
    <scope>NUCLEOTIDE SEQUENCE [GENOMIC DNA] (ISOFORM 1)</scope>
</reference>
<reference key="2">
    <citation type="journal article" date="1988" name="J. Biol. Chem.">
        <title>Two distinct species of human growth hormone-variant mRNA in the human placenta predict the expression of novel growth hormone proteins.</title>
        <authorList>
            <person name="Cooke N.E."/>
            <person name="Ray J."/>
            <person name="Emery J.G."/>
            <person name="Liebhaber S.A."/>
        </authorList>
    </citation>
    <scope>NUCLEOTIDE SEQUENCE [MRNA] (ISOFORMS 1 AND 2)</scope>
    <source>
        <tissue>Placenta</tissue>
    </source>
</reference>
<reference key="3">
    <citation type="journal article" date="1988" name="Arch. Int. Physiol. Biochim.">
        <title>Cloning and nucleotide sequence of placental hGH-V cDNA.</title>
        <authorList>
            <person name="Igout A."/>
            <person name="Scippo M.L."/>
            <person name="Frankenne F."/>
            <person name="Hennen G."/>
        </authorList>
    </citation>
    <scope>NUCLEOTIDE SEQUENCE [MRNA] (ISOFORM 1)</scope>
</reference>
<reference key="4">
    <citation type="journal article" date="1989" name="Genomics">
        <title>The human growth hormone locus: nucleotide sequence, biology, and evolution.</title>
        <authorList>
            <person name="Chen E.Y."/>
            <person name="Liao Y.C."/>
            <person name="Smith D.H."/>
            <person name="Barrera-Saldana H.A."/>
            <person name="Gelinas R.E."/>
            <person name="Seeburg P.H."/>
        </authorList>
    </citation>
    <scope>NUCLEOTIDE SEQUENCE [GENOMIC DNA] (ISOFORM 1)</scope>
</reference>
<reference key="5">
    <citation type="journal article" date="1998" name="J. Clin. Endocrinol. Metab.">
        <title>Cloning of two novel growth hormone transcripts expressed in human placenta.</title>
        <authorList>
            <person name="Boguszewski C.L."/>
            <person name="Svensson P.A."/>
            <person name="Jansson T."/>
            <person name="Clark R."/>
            <person name="Carlsson L.M.S."/>
            <person name="Carlsson B."/>
        </authorList>
    </citation>
    <scope>NUCLEOTIDE SEQUENCE [MRNA] (ISOFORMS 3 AND 4)</scope>
    <source>
        <tissue>Placenta</tissue>
    </source>
</reference>
<reference key="6">
    <citation type="journal article" date="2008" name="Hum. Mutat.">
        <title>Complex signatures of locus-specific selective pressures and gene conversion on human growth hormone/chorionic somatomammotropin genes.</title>
        <authorList>
            <person name="Sedman L."/>
            <person name="Padhukasahasram B."/>
            <person name="Kelgo P."/>
            <person name="Laan M."/>
        </authorList>
    </citation>
    <scope>NUCLEOTIDE SEQUENCE [GENOMIC DNA]</scope>
</reference>
<reference key="7">
    <citation type="journal article" date="2004" name="Nat. Genet.">
        <title>Complete sequencing and characterization of 21,243 full-length human cDNAs.</title>
        <authorList>
            <person name="Ota T."/>
            <person name="Suzuki Y."/>
            <person name="Nishikawa T."/>
            <person name="Otsuki T."/>
            <person name="Sugiyama T."/>
            <person name="Irie R."/>
            <person name="Wakamatsu A."/>
            <person name="Hayashi K."/>
            <person name="Sato H."/>
            <person name="Nagai K."/>
            <person name="Kimura K."/>
            <person name="Makita H."/>
            <person name="Sekine M."/>
            <person name="Obayashi M."/>
            <person name="Nishi T."/>
            <person name="Shibahara T."/>
            <person name="Tanaka T."/>
            <person name="Ishii S."/>
            <person name="Yamamoto J."/>
            <person name="Saito K."/>
            <person name="Kawai Y."/>
            <person name="Isono Y."/>
            <person name="Nakamura Y."/>
            <person name="Nagahari K."/>
            <person name="Murakami K."/>
            <person name="Yasuda T."/>
            <person name="Iwayanagi T."/>
            <person name="Wagatsuma M."/>
            <person name="Shiratori A."/>
            <person name="Sudo H."/>
            <person name="Hosoiri T."/>
            <person name="Kaku Y."/>
            <person name="Kodaira H."/>
            <person name="Kondo H."/>
            <person name="Sugawara M."/>
            <person name="Takahashi M."/>
            <person name="Kanda K."/>
            <person name="Yokoi T."/>
            <person name="Furuya T."/>
            <person name="Kikkawa E."/>
            <person name="Omura Y."/>
            <person name="Abe K."/>
            <person name="Kamihara K."/>
            <person name="Katsuta N."/>
            <person name="Sato K."/>
            <person name="Tanikawa M."/>
            <person name="Yamazaki M."/>
            <person name="Ninomiya K."/>
            <person name="Ishibashi T."/>
            <person name="Yamashita H."/>
            <person name="Murakawa K."/>
            <person name="Fujimori K."/>
            <person name="Tanai H."/>
            <person name="Kimata M."/>
            <person name="Watanabe M."/>
            <person name="Hiraoka S."/>
            <person name="Chiba Y."/>
            <person name="Ishida S."/>
            <person name="Ono Y."/>
            <person name="Takiguchi S."/>
            <person name="Watanabe S."/>
            <person name="Yosida M."/>
            <person name="Hotuta T."/>
            <person name="Kusano J."/>
            <person name="Kanehori K."/>
            <person name="Takahashi-Fujii A."/>
            <person name="Hara H."/>
            <person name="Tanase T.-O."/>
            <person name="Nomura Y."/>
            <person name="Togiya S."/>
            <person name="Komai F."/>
            <person name="Hara R."/>
            <person name="Takeuchi K."/>
            <person name="Arita M."/>
            <person name="Imose N."/>
            <person name="Musashino K."/>
            <person name="Yuuki H."/>
            <person name="Oshima A."/>
            <person name="Sasaki N."/>
            <person name="Aotsuka S."/>
            <person name="Yoshikawa Y."/>
            <person name="Matsunawa H."/>
            <person name="Ichihara T."/>
            <person name="Shiohata N."/>
            <person name="Sano S."/>
            <person name="Moriya S."/>
            <person name="Momiyama H."/>
            <person name="Satoh N."/>
            <person name="Takami S."/>
            <person name="Terashima Y."/>
            <person name="Suzuki O."/>
            <person name="Nakagawa S."/>
            <person name="Senoh A."/>
            <person name="Mizoguchi H."/>
            <person name="Goto Y."/>
            <person name="Shimizu F."/>
            <person name="Wakebe H."/>
            <person name="Hishigaki H."/>
            <person name="Watanabe T."/>
            <person name="Sugiyama A."/>
            <person name="Takemoto M."/>
            <person name="Kawakami B."/>
            <person name="Yamazaki M."/>
            <person name="Watanabe K."/>
            <person name="Kumagai A."/>
            <person name="Itakura S."/>
            <person name="Fukuzumi Y."/>
            <person name="Fujimori Y."/>
            <person name="Komiyama M."/>
            <person name="Tashiro H."/>
            <person name="Tanigami A."/>
            <person name="Fujiwara T."/>
            <person name="Ono T."/>
            <person name="Yamada K."/>
            <person name="Fujii Y."/>
            <person name="Ozaki K."/>
            <person name="Hirao M."/>
            <person name="Ohmori Y."/>
            <person name="Kawabata A."/>
            <person name="Hikiji T."/>
            <person name="Kobatake N."/>
            <person name="Inagaki H."/>
            <person name="Ikema Y."/>
            <person name="Okamoto S."/>
            <person name="Okitani R."/>
            <person name="Kawakami T."/>
            <person name="Noguchi S."/>
            <person name="Itoh T."/>
            <person name="Shigeta K."/>
            <person name="Senba T."/>
            <person name="Matsumura K."/>
            <person name="Nakajima Y."/>
            <person name="Mizuno T."/>
            <person name="Morinaga M."/>
            <person name="Sasaki M."/>
            <person name="Togashi T."/>
            <person name="Oyama M."/>
            <person name="Hata H."/>
            <person name="Watanabe M."/>
            <person name="Komatsu T."/>
            <person name="Mizushima-Sugano J."/>
            <person name="Satoh T."/>
            <person name="Shirai Y."/>
            <person name="Takahashi Y."/>
            <person name="Nakagawa K."/>
            <person name="Okumura K."/>
            <person name="Nagase T."/>
            <person name="Nomura N."/>
            <person name="Kikuchi H."/>
            <person name="Masuho Y."/>
            <person name="Yamashita R."/>
            <person name="Nakai K."/>
            <person name="Yada T."/>
            <person name="Nakamura Y."/>
            <person name="Ohara O."/>
            <person name="Isogai T."/>
            <person name="Sugano S."/>
        </authorList>
    </citation>
    <scope>NUCLEOTIDE SEQUENCE [LARGE SCALE MRNA] (ISOFORM 2)</scope>
    <source>
        <tissue>Placenta</tissue>
    </source>
</reference>
<reference key="8">
    <citation type="journal article" date="2008" name="Nat. Methods">
        <title>Human protein factory for converting the transcriptome into an in vitro-expressed proteome.</title>
        <authorList>
            <person name="Goshima N."/>
            <person name="Kawamura Y."/>
            <person name="Fukumoto A."/>
            <person name="Miura A."/>
            <person name="Honma R."/>
            <person name="Satoh R."/>
            <person name="Wakamatsu A."/>
            <person name="Yamamoto J."/>
            <person name="Kimura K."/>
            <person name="Nishikawa T."/>
            <person name="Andoh T."/>
            <person name="Iida Y."/>
            <person name="Ishikawa K."/>
            <person name="Ito E."/>
            <person name="Kagawa N."/>
            <person name="Kaminaga C."/>
            <person name="Kanehori K."/>
            <person name="Kawakami B."/>
            <person name="Kenmochi K."/>
            <person name="Kimura R."/>
            <person name="Kobayashi M."/>
            <person name="Kuroita T."/>
            <person name="Kuwayama H."/>
            <person name="Maruyama Y."/>
            <person name="Matsuo K."/>
            <person name="Minami K."/>
            <person name="Mitsubori M."/>
            <person name="Mori M."/>
            <person name="Morishita R."/>
            <person name="Murase A."/>
            <person name="Nishikawa A."/>
            <person name="Nishikawa S."/>
            <person name="Okamoto T."/>
            <person name="Sakagami N."/>
            <person name="Sakamoto Y."/>
            <person name="Sasaki Y."/>
            <person name="Seki T."/>
            <person name="Sono S."/>
            <person name="Sugiyama A."/>
            <person name="Sumiya T."/>
            <person name="Takayama T."/>
            <person name="Takayama Y."/>
            <person name="Takeda H."/>
            <person name="Togashi T."/>
            <person name="Yahata K."/>
            <person name="Yamada H."/>
            <person name="Yanagisawa Y."/>
            <person name="Endo Y."/>
            <person name="Imamoto F."/>
            <person name="Kisu Y."/>
            <person name="Tanaka S."/>
            <person name="Isogai T."/>
            <person name="Imai J."/>
            <person name="Watanabe S."/>
            <person name="Nomura N."/>
        </authorList>
    </citation>
    <scope>NUCLEOTIDE SEQUENCE [LARGE SCALE MRNA] (ISOFORM 3)</scope>
</reference>
<reference key="9">
    <citation type="journal article" date="2006" name="Nature">
        <title>DNA sequence of human chromosome 17 and analysis of rearrangement in the human lineage.</title>
        <authorList>
            <person name="Zody M.C."/>
            <person name="Garber M."/>
            <person name="Adams D.J."/>
            <person name="Sharpe T."/>
            <person name="Harrow J."/>
            <person name="Lupski J.R."/>
            <person name="Nicholson C."/>
            <person name="Searle S.M."/>
            <person name="Wilming L."/>
            <person name="Young S.K."/>
            <person name="Abouelleil A."/>
            <person name="Allen N.R."/>
            <person name="Bi W."/>
            <person name="Bloom T."/>
            <person name="Borowsky M.L."/>
            <person name="Bugalter B.E."/>
            <person name="Butler J."/>
            <person name="Chang J.L."/>
            <person name="Chen C.-K."/>
            <person name="Cook A."/>
            <person name="Corum B."/>
            <person name="Cuomo C.A."/>
            <person name="de Jong P.J."/>
            <person name="DeCaprio D."/>
            <person name="Dewar K."/>
            <person name="FitzGerald M."/>
            <person name="Gilbert J."/>
            <person name="Gibson R."/>
            <person name="Gnerre S."/>
            <person name="Goldstein S."/>
            <person name="Grafham D.V."/>
            <person name="Grocock R."/>
            <person name="Hafez N."/>
            <person name="Hagopian D.S."/>
            <person name="Hart E."/>
            <person name="Norman C.H."/>
            <person name="Humphray S."/>
            <person name="Jaffe D.B."/>
            <person name="Jones M."/>
            <person name="Kamal M."/>
            <person name="Khodiyar V.K."/>
            <person name="LaButti K."/>
            <person name="Laird G."/>
            <person name="Lehoczky J."/>
            <person name="Liu X."/>
            <person name="Lokyitsang T."/>
            <person name="Loveland J."/>
            <person name="Lui A."/>
            <person name="Macdonald P."/>
            <person name="Major J.E."/>
            <person name="Matthews L."/>
            <person name="Mauceli E."/>
            <person name="McCarroll S.A."/>
            <person name="Mihalev A.H."/>
            <person name="Mudge J."/>
            <person name="Nguyen C."/>
            <person name="Nicol R."/>
            <person name="O'Leary S.B."/>
            <person name="Osoegawa K."/>
            <person name="Schwartz D.C."/>
            <person name="Shaw-Smith C."/>
            <person name="Stankiewicz P."/>
            <person name="Steward C."/>
            <person name="Swarbreck D."/>
            <person name="Venkataraman V."/>
            <person name="Whittaker C.A."/>
            <person name="Yang X."/>
            <person name="Zimmer A.R."/>
            <person name="Bradley A."/>
            <person name="Hubbard T."/>
            <person name="Birren B.W."/>
            <person name="Rogers J."/>
            <person name="Lander E.S."/>
            <person name="Nusbaum C."/>
        </authorList>
    </citation>
    <scope>NUCLEOTIDE SEQUENCE [LARGE SCALE GENOMIC DNA]</scope>
</reference>
<reference key="10">
    <citation type="submission" date="2005-07" db="EMBL/GenBank/DDBJ databases">
        <authorList>
            <person name="Mural R.J."/>
            <person name="Istrail S."/>
            <person name="Sutton G.G."/>
            <person name="Florea L."/>
            <person name="Halpern A.L."/>
            <person name="Mobarry C.M."/>
            <person name="Lippert R."/>
            <person name="Walenz B."/>
            <person name="Shatkay H."/>
            <person name="Dew I."/>
            <person name="Miller J.R."/>
            <person name="Flanigan M.J."/>
            <person name="Edwards N.J."/>
            <person name="Bolanos R."/>
            <person name="Fasulo D."/>
            <person name="Halldorsson B.V."/>
            <person name="Hannenhalli S."/>
            <person name="Turner R."/>
            <person name="Yooseph S."/>
            <person name="Lu F."/>
            <person name="Nusskern D.R."/>
            <person name="Shue B.C."/>
            <person name="Zheng X.H."/>
            <person name="Zhong F."/>
            <person name="Delcher A.L."/>
            <person name="Huson D.H."/>
            <person name="Kravitz S.A."/>
            <person name="Mouchard L."/>
            <person name="Reinert K."/>
            <person name="Remington K.A."/>
            <person name="Clark A.G."/>
            <person name="Waterman M.S."/>
            <person name="Eichler E.E."/>
            <person name="Adams M.D."/>
            <person name="Hunkapiller M.W."/>
            <person name="Myers E.W."/>
            <person name="Venter J.C."/>
        </authorList>
    </citation>
    <scope>NUCLEOTIDE SEQUENCE [LARGE SCALE GENOMIC DNA]</scope>
</reference>
<reference key="11">
    <citation type="journal article" date="2004" name="Genome Res.">
        <title>The status, quality, and expansion of the NIH full-length cDNA project: the Mammalian Gene Collection (MGC).</title>
        <authorList>
            <consortium name="The MGC Project Team"/>
        </authorList>
    </citation>
    <scope>NUCLEOTIDE SEQUENCE [LARGE SCALE MRNA] (ISOFORM 1)</scope>
    <source>
        <tissue>Placenta</tissue>
    </source>
</reference>
<reference key="12">
    <citation type="journal article" date="1990" name="J. Clin. Endocrinol. Metab.">
        <title>Identification of placental human growth hormone as the growth hormone-V gene expression product.</title>
        <authorList>
            <person name="Frankenne F."/>
            <person name="Scippo M.L."/>
            <person name="Van Beeumen J."/>
            <person name="Igout A."/>
            <person name="Hennen G."/>
        </authorList>
    </citation>
    <scope>PROTEIN SEQUENCE OF 27-57</scope>
</reference>
<reference key="13">
    <citation type="journal article" date="1999" name="Horm. Res. 51 Suppl.">
        <title>Growth hormone heterogeneity in human pituitary and plasma.</title>
        <authorList>
            <person name="Baumann G."/>
        </authorList>
    </citation>
    <scope>REVIEW</scope>
</reference>
<name>SOM2_HUMAN</name>